<organism>
    <name type="scientific">Methanoculleus marisnigri (strain ATCC 35101 / DSM 1498 / JR1)</name>
    <dbReference type="NCBI Taxonomy" id="368407"/>
    <lineage>
        <taxon>Archaea</taxon>
        <taxon>Methanobacteriati</taxon>
        <taxon>Methanobacteriota</taxon>
        <taxon>Stenosarchaea group</taxon>
        <taxon>Methanomicrobia</taxon>
        <taxon>Methanomicrobiales</taxon>
        <taxon>Methanomicrobiaceae</taxon>
        <taxon>Methanoculleus</taxon>
    </lineage>
</organism>
<reference key="1">
    <citation type="journal article" date="2009" name="Stand. Genomic Sci.">
        <title>Complete genome sequence of Methanoculleus marisnigri Romesser et al. 1981 type strain JR1.</title>
        <authorList>
            <person name="Anderson I.J."/>
            <person name="Sieprawska-Lupa M."/>
            <person name="Lapidus A."/>
            <person name="Nolan M."/>
            <person name="Copeland A."/>
            <person name="Glavina Del Rio T."/>
            <person name="Tice H."/>
            <person name="Dalin E."/>
            <person name="Barry K."/>
            <person name="Saunders E."/>
            <person name="Han C."/>
            <person name="Brettin T."/>
            <person name="Detter J.C."/>
            <person name="Bruce D."/>
            <person name="Mikhailova N."/>
            <person name="Pitluck S."/>
            <person name="Hauser L."/>
            <person name="Land M."/>
            <person name="Lucas S."/>
            <person name="Richardson P."/>
            <person name="Whitman W.B."/>
            <person name="Kyrpides N.C."/>
        </authorList>
    </citation>
    <scope>NUCLEOTIDE SEQUENCE [LARGE SCALE GENOMIC DNA]</scope>
    <source>
        <strain>ATCC 35101 / DSM 1498 / JR1</strain>
    </source>
</reference>
<evidence type="ECO:0000255" key="1">
    <source>
        <dbReference type="HAMAP-Rule" id="MF_02003"/>
    </source>
</evidence>
<comment type="function">
    <text evidence="1">Catalyzes the attachment of isoleucine to tRNA(Ile). As IleRS can inadvertently accommodate and process structurally similar amino acids such as valine, to avoid such errors it has two additional distinct tRNA(Ile)-dependent editing activities. One activity is designated as 'pretransfer' editing and involves the hydrolysis of activated Val-AMP. The other activity is designated 'posttransfer' editing and involves deacylation of mischarged Val-tRNA(Ile).</text>
</comment>
<comment type="catalytic activity">
    <reaction evidence="1">
        <text>tRNA(Ile) + L-isoleucine + ATP = L-isoleucyl-tRNA(Ile) + AMP + diphosphate</text>
        <dbReference type="Rhea" id="RHEA:11060"/>
        <dbReference type="Rhea" id="RHEA-COMP:9666"/>
        <dbReference type="Rhea" id="RHEA-COMP:9695"/>
        <dbReference type="ChEBI" id="CHEBI:30616"/>
        <dbReference type="ChEBI" id="CHEBI:33019"/>
        <dbReference type="ChEBI" id="CHEBI:58045"/>
        <dbReference type="ChEBI" id="CHEBI:78442"/>
        <dbReference type="ChEBI" id="CHEBI:78528"/>
        <dbReference type="ChEBI" id="CHEBI:456215"/>
        <dbReference type="EC" id="6.1.1.5"/>
    </reaction>
</comment>
<comment type="cofactor">
    <cofactor evidence="1">
        <name>Zn(2+)</name>
        <dbReference type="ChEBI" id="CHEBI:29105"/>
    </cofactor>
</comment>
<comment type="subunit">
    <text evidence="1">Monomer.</text>
</comment>
<comment type="subcellular location">
    <subcellularLocation>
        <location evidence="1">Cytoplasm</location>
    </subcellularLocation>
</comment>
<comment type="domain">
    <text evidence="1">IleRS has two distinct active sites: one for aminoacylation and one for editing. The misactivated valine is translocated from the active site to the editing site, which sterically excludes the correctly activated isoleucine. The single editing site contains two valyl binding pockets, one specific for each substrate (Val-AMP or Val-tRNA(Ile)).</text>
</comment>
<comment type="similarity">
    <text evidence="1">Belongs to the class-I aminoacyl-tRNA synthetase family. IleS type 2 subfamily.</text>
</comment>
<accession>A3CSI6</accession>
<proteinExistence type="inferred from homology"/>
<keyword id="KW-0030">Aminoacyl-tRNA synthetase</keyword>
<keyword id="KW-0067">ATP-binding</keyword>
<keyword id="KW-0963">Cytoplasm</keyword>
<keyword id="KW-0436">Ligase</keyword>
<keyword id="KW-0479">Metal-binding</keyword>
<keyword id="KW-0547">Nucleotide-binding</keyword>
<keyword id="KW-0648">Protein biosynthesis</keyword>
<keyword id="KW-0862">Zinc</keyword>
<feature type="chain" id="PRO_1000022156" description="Isoleucine--tRNA ligase">
    <location>
        <begin position="1"/>
        <end position="1059"/>
    </location>
</feature>
<feature type="short sequence motif" description="'HIGH' region">
    <location>
        <begin position="47"/>
        <end position="57"/>
    </location>
</feature>
<feature type="short sequence motif" description="'KMSKS' region">
    <location>
        <begin position="591"/>
        <end position="595"/>
    </location>
</feature>
<feature type="binding site" evidence="1">
    <location>
        <position position="594"/>
    </location>
    <ligand>
        <name>ATP</name>
        <dbReference type="ChEBI" id="CHEBI:30616"/>
    </ligand>
</feature>
<sequence length="1059" mass="120495">MKEVTGSYNPRELEAGVQDTWKRENTYARVQEVRKDGKAFFFVDGPPYTTGHIHLGTAWNKIIKDTILRYHRMGGRNIIERAGYDMHGLPIEVKVEHQLGFTSKKDIEDYGIAAFIEQCRTFAVTHMEIMSEQFRQLGIWLDFDDPYQTIKAEYIESAWWAVQRAEERGLLERGHRVVNWCPRCETAIADSEVEYWDETDPSIFVKFPVTGRENEYLVIWTTTPWTLPANVAVAVSPAFTYARVAAKKDGSEEILWIADELVESVLKMGRYQDYTVLERVNGSDLVGTEYESPLAGQVPHQAEIRHRVVAADYVALENTGLVHIAPGHGWDDYLIGIQEGLEAFCPVDAGGCFTREAGAFADMYVRDANDLVIDALGDYLLARRTITHRYGHCWRCKTSIIYRATAQWFLKATEIREPMLQEIAKVKWYPEWAGSARFHDFVRDSRDWCISRQRYWGIPIPIWQCEQCGERTVIGTIAELEERSGARVPDPHRPYVDEVVIPCSCGGEMHRVADIFDVWFDSAVASWATLGFPREREAFDRLWPADFITEGQDQTRGWFYSQLGASTVAFGRAPYKSVLMHGFALDADGRKMSKSFGNVVTPEEVMNQFGVDVLRFYVLWANAPWDDLKFNWDSVKTIHRTLNILWNVYRFPLPYMVLDSFEPAAGDGGLWDGSFVRGNINDMPEEDRWIISRVNSLARTTAGDMQEYHLHRVTRALAAFILEDLSRWYVQLVRPRMWLEEDSPEKRYAYETVYYVMRRLVALLAPFTPHIAEEIYGNLRLAGDPESVHMLDWPEADDLLIAPDLESAMEVVRSFDDAVATARQNGRRKLRWPVAETVVVTGSDGVKTALEDLNDLALNRANSRTVRVVTGRWDRILWQAEPVMRAIGPEFGKEGPKVKALIEGADGTALKAAIERDGKAELGGYEIAERHVTFAEALPEGVFAAPMKDATVYVDVTLTPALEAEGYAREVIRRIQEMRRQLDLNVDDFIVAAVDVADDRVASLIAEEEWQKEIAGEVRAAALTVRRTDGERPTETFALEKDWDVEGVQMQIGISRAGE</sequence>
<protein>
    <recommendedName>
        <fullName evidence="1">Isoleucine--tRNA ligase</fullName>
        <ecNumber evidence="1">6.1.1.5</ecNumber>
    </recommendedName>
    <alternativeName>
        <fullName evidence="1">Isoleucyl-tRNA synthetase</fullName>
        <shortName evidence="1">IleRS</shortName>
    </alternativeName>
</protein>
<name>SYI_METMJ</name>
<dbReference type="EC" id="6.1.1.5" evidence="1"/>
<dbReference type="EMBL" id="CP000562">
    <property type="protein sequence ID" value="ABN56336.1"/>
    <property type="molecule type" value="Genomic_DNA"/>
</dbReference>
<dbReference type="RefSeq" id="WP_011843246.1">
    <property type="nucleotide sequence ID" value="NC_009051.1"/>
</dbReference>
<dbReference type="SMR" id="A3CSI6"/>
<dbReference type="STRING" id="368407.Memar_0403"/>
<dbReference type="GeneID" id="4847697"/>
<dbReference type="GeneID" id="76730968"/>
<dbReference type="KEGG" id="mem:Memar_0403"/>
<dbReference type="eggNOG" id="arCOG00807">
    <property type="taxonomic scope" value="Archaea"/>
</dbReference>
<dbReference type="HOGENOM" id="CLU_001493_1_1_2"/>
<dbReference type="OrthoDB" id="30823at2157"/>
<dbReference type="Proteomes" id="UP000002146">
    <property type="component" value="Chromosome"/>
</dbReference>
<dbReference type="GO" id="GO:0005737">
    <property type="term" value="C:cytoplasm"/>
    <property type="evidence" value="ECO:0007669"/>
    <property type="project" value="UniProtKB-SubCell"/>
</dbReference>
<dbReference type="GO" id="GO:0002161">
    <property type="term" value="F:aminoacyl-tRNA deacylase activity"/>
    <property type="evidence" value="ECO:0007669"/>
    <property type="project" value="InterPro"/>
</dbReference>
<dbReference type="GO" id="GO:0005524">
    <property type="term" value="F:ATP binding"/>
    <property type="evidence" value="ECO:0007669"/>
    <property type="project" value="UniProtKB-UniRule"/>
</dbReference>
<dbReference type="GO" id="GO:0004822">
    <property type="term" value="F:isoleucine-tRNA ligase activity"/>
    <property type="evidence" value="ECO:0007669"/>
    <property type="project" value="UniProtKB-UniRule"/>
</dbReference>
<dbReference type="GO" id="GO:0000049">
    <property type="term" value="F:tRNA binding"/>
    <property type="evidence" value="ECO:0007669"/>
    <property type="project" value="InterPro"/>
</dbReference>
<dbReference type="GO" id="GO:0008270">
    <property type="term" value="F:zinc ion binding"/>
    <property type="evidence" value="ECO:0007669"/>
    <property type="project" value="UniProtKB-UniRule"/>
</dbReference>
<dbReference type="GO" id="GO:0006428">
    <property type="term" value="P:isoleucyl-tRNA aminoacylation"/>
    <property type="evidence" value="ECO:0007669"/>
    <property type="project" value="UniProtKB-UniRule"/>
</dbReference>
<dbReference type="CDD" id="cd07961">
    <property type="entry name" value="Anticodon_Ia_Ile_ABEc"/>
    <property type="match status" value="1"/>
</dbReference>
<dbReference type="CDD" id="cd00818">
    <property type="entry name" value="IleRS_core"/>
    <property type="match status" value="1"/>
</dbReference>
<dbReference type="FunFam" id="3.40.50.620:FF:000286">
    <property type="entry name" value="Isoleucine--tRNA ligase"/>
    <property type="match status" value="1"/>
</dbReference>
<dbReference type="Gene3D" id="3.40.50.620">
    <property type="entry name" value="HUPs"/>
    <property type="match status" value="2"/>
</dbReference>
<dbReference type="Gene3D" id="1.10.730.10">
    <property type="entry name" value="Isoleucyl-tRNA Synthetase, Domain 1"/>
    <property type="match status" value="1"/>
</dbReference>
<dbReference type="Gene3D" id="3.90.740.10">
    <property type="entry name" value="Valyl/Leucyl/Isoleucyl-tRNA synthetase, editing domain"/>
    <property type="match status" value="1"/>
</dbReference>
<dbReference type="HAMAP" id="MF_02003">
    <property type="entry name" value="Ile_tRNA_synth_type2"/>
    <property type="match status" value="1"/>
</dbReference>
<dbReference type="InterPro" id="IPR001412">
    <property type="entry name" value="aa-tRNA-synth_I_CS"/>
</dbReference>
<dbReference type="InterPro" id="IPR002300">
    <property type="entry name" value="aa-tRNA-synth_Ia"/>
</dbReference>
<dbReference type="InterPro" id="IPR033709">
    <property type="entry name" value="Anticodon_Ile_ABEc"/>
</dbReference>
<dbReference type="InterPro" id="IPR002301">
    <property type="entry name" value="Ile-tRNA-ligase"/>
</dbReference>
<dbReference type="InterPro" id="IPR023586">
    <property type="entry name" value="Ile-tRNA-ligase_type2"/>
</dbReference>
<dbReference type="InterPro" id="IPR013155">
    <property type="entry name" value="M/V/L/I-tRNA-synth_anticd-bd"/>
</dbReference>
<dbReference type="InterPro" id="IPR014729">
    <property type="entry name" value="Rossmann-like_a/b/a_fold"/>
</dbReference>
<dbReference type="InterPro" id="IPR009080">
    <property type="entry name" value="tRNAsynth_Ia_anticodon-bd"/>
</dbReference>
<dbReference type="InterPro" id="IPR009008">
    <property type="entry name" value="Val/Leu/Ile-tRNA-synth_edit"/>
</dbReference>
<dbReference type="NCBIfam" id="TIGR00392">
    <property type="entry name" value="ileS"/>
    <property type="match status" value="1"/>
</dbReference>
<dbReference type="PANTHER" id="PTHR42780:SF1">
    <property type="entry name" value="ISOLEUCINE--TRNA LIGASE, CYTOPLASMIC"/>
    <property type="match status" value="1"/>
</dbReference>
<dbReference type="PANTHER" id="PTHR42780">
    <property type="entry name" value="SOLEUCYL-TRNA SYNTHETASE"/>
    <property type="match status" value="1"/>
</dbReference>
<dbReference type="Pfam" id="PF08264">
    <property type="entry name" value="Anticodon_1"/>
    <property type="match status" value="1"/>
</dbReference>
<dbReference type="Pfam" id="PF19302">
    <property type="entry name" value="DUF5915"/>
    <property type="match status" value="1"/>
</dbReference>
<dbReference type="Pfam" id="PF00133">
    <property type="entry name" value="tRNA-synt_1"/>
    <property type="match status" value="1"/>
</dbReference>
<dbReference type="PRINTS" id="PR00984">
    <property type="entry name" value="TRNASYNTHILE"/>
</dbReference>
<dbReference type="SUPFAM" id="SSF47323">
    <property type="entry name" value="Anticodon-binding domain of a subclass of class I aminoacyl-tRNA synthetases"/>
    <property type="match status" value="1"/>
</dbReference>
<dbReference type="SUPFAM" id="SSF52374">
    <property type="entry name" value="Nucleotidylyl transferase"/>
    <property type="match status" value="1"/>
</dbReference>
<dbReference type="SUPFAM" id="SSF50677">
    <property type="entry name" value="ValRS/IleRS/LeuRS editing domain"/>
    <property type="match status" value="1"/>
</dbReference>
<dbReference type="PROSITE" id="PS00178">
    <property type="entry name" value="AA_TRNA_LIGASE_I"/>
    <property type="match status" value="1"/>
</dbReference>
<gene>
    <name evidence="1" type="primary">ileS</name>
    <name type="ordered locus">Memar_0403</name>
</gene>